<gene>
    <name evidence="1" type="primary">tpiA</name>
    <name type="ordered locus">SSU98_0525</name>
</gene>
<evidence type="ECO:0000255" key="1">
    <source>
        <dbReference type="HAMAP-Rule" id="MF_00147"/>
    </source>
</evidence>
<organism>
    <name type="scientific">Streptococcus suis (strain 98HAH33)</name>
    <dbReference type="NCBI Taxonomy" id="391296"/>
    <lineage>
        <taxon>Bacteria</taxon>
        <taxon>Bacillati</taxon>
        <taxon>Bacillota</taxon>
        <taxon>Bacilli</taxon>
        <taxon>Lactobacillales</taxon>
        <taxon>Streptococcaceae</taxon>
        <taxon>Streptococcus</taxon>
    </lineage>
</organism>
<protein>
    <recommendedName>
        <fullName evidence="1">Triosephosphate isomerase</fullName>
        <shortName evidence="1">TIM</shortName>
        <shortName evidence="1">TPI</shortName>
        <ecNumber evidence="1">5.3.1.1</ecNumber>
    </recommendedName>
    <alternativeName>
        <fullName evidence="1">Triose-phosphate isomerase</fullName>
    </alternativeName>
</protein>
<feature type="chain" id="PRO_0000307580" description="Triosephosphate isomerase">
    <location>
        <begin position="1"/>
        <end position="250"/>
    </location>
</feature>
<feature type="active site" description="Electrophile" evidence="1">
    <location>
        <position position="96"/>
    </location>
</feature>
<feature type="active site" description="Proton acceptor" evidence="1">
    <location>
        <position position="168"/>
    </location>
</feature>
<feature type="binding site" evidence="1">
    <location>
        <begin position="10"/>
        <end position="12"/>
    </location>
    <ligand>
        <name>substrate</name>
    </ligand>
</feature>
<feature type="binding site" evidence="1">
    <location>
        <position position="174"/>
    </location>
    <ligand>
        <name>substrate</name>
    </ligand>
</feature>
<feature type="binding site" evidence="1">
    <location>
        <position position="214"/>
    </location>
    <ligand>
        <name>substrate</name>
    </ligand>
</feature>
<feature type="binding site" evidence="1">
    <location>
        <begin position="235"/>
        <end position="236"/>
    </location>
    <ligand>
        <name>substrate</name>
    </ligand>
</feature>
<reference key="1">
    <citation type="journal article" date="2007" name="PLoS ONE">
        <title>A glimpse of streptococcal toxic shock syndrome from comparative genomics of S. suis 2 Chinese isolates.</title>
        <authorList>
            <person name="Chen C."/>
            <person name="Tang J."/>
            <person name="Dong W."/>
            <person name="Wang C."/>
            <person name="Feng Y."/>
            <person name="Wang J."/>
            <person name="Zheng F."/>
            <person name="Pan X."/>
            <person name="Liu D."/>
            <person name="Li M."/>
            <person name="Song Y."/>
            <person name="Zhu X."/>
            <person name="Sun H."/>
            <person name="Feng T."/>
            <person name="Guo Z."/>
            <person name="Ju A."/>
            <person name="Ge J."/>
            <person name="Dong Y."/>
            <person name="Sun W."/>
            <person name="Jiang Y."/>
            <person name="Wang J."/>
            <person name="Yan J."/>
            <person name="Yang H."/>
            <person name="Wang X."/>
            <person name="Gao G.F."/>
            <person name="Yang R."/>
            <person name="Wang J."/>
            <person name="Yu J."/>
        </authorList>
    </citation>
    <scope>NUCLEOTIDE SEQUENCE [LARGE SCALE GENOMIC DNA]</scope>
    <source>
        <strain>98HAH33</strain>
    </source>
</reference>
<comment type="function">
    <text evidence="1">Involved in the gluconeogenesis. Catalyzes stereospecifically the conversion of dihydroxyacetone phosphate (DHAP) to D-glyceraldehyde-3-phosphate (G3P).</text>
</comment>
<comment type="catalytic activity">
    <reaction evidence="1">
        <text>D-glyceraldehyde 3-phosphate = dihydroxyacetone phosphate</text>
        <dbReference type="Rhea" id="RHEA:18585"/>
        <dbReference type="ChEBI" id="CHEBI:57642"/>
        <dbReference type="ChEBI" id="CHEBI:59776"/>
        <dbReference type="EC" id="5.3.1.1"/>
    </reaction>
</comment>
<comment type="pathway">
    <text evidence="1">Carbohydrate biosynthesis; gluconeogenesis.</text>
</comment>
<comment type="pathway">
    <text evidence="1">Carbohydrate degradation; glycolysis; D-glyceraldehyde 3-phosphate from glycerone phosphate: step 1/1.</text>
</comment>
<comment type="subunit">
    <text evidence="1">Homodimer.</text>
</comment>
<comment type="subcellular location">
    <subcellularLocation>
        <location evidence="1">Cytoplasm</location>
    </subcellularLocation>
</comment>
<comment type="similarity">
    <text evidence="1">Belongs to the triosephosphate isomerase family.</text>
</comment>
<accession>A4VZZ4</accession>
<name>TPIS_STRS2</name>
<keyword id="KW-0963">Cytoplasm</keyword>
<keyword id="KW-0312">Gluconeogenesis</keyword>
<keyword id="KW-0324">Glycolysis</keyword>
<keyword id="KW-0413">Isomerase</keyword>
<sequence>MSRKPIIAGNWKMNKNPQEAQAFVEAIAGKLPAGDKIEAAIAAPAVDLNALLWFAKDSELKVAAQNCYFEDAGAFTGETSPKVLAEMGVNYVVIGHSERRDYFHETDEDINKKAHAIFRNGLTPIICCGESLETYEAGKAVEFVGAQVSAALKDLTADQVASLVIAYEPIWAIGTGKSATKDDAQNMCKAVRDVVAADFGQEVADKVRVQYGGSVNPSNVAEYMACPDVDGALVGGASLEAESFLALLNF</sequence>
<dbReference type="EC" id="5.3.1.1" evidence="1"/>
<dbReference type="EMBL" id="CP000408">
    <property type="protein sequence ID" value="ABP91683.1"/>
    <property type="molecule type" value="Genomic_DNA"/>
</dbReference>
<dbReference type="SMR" id="A4VZZ4"/>
<dbReference type="KEGG" id="ssv:SSU98_0525"/>
<dbReference type="HOGENOM" id="CLU_024251_2_3_9"/>
<dbReference type="UniPathway" id="UPA00109">
    <property type="reaction ID" value="UER00189"/>
</dbReference>
<dbReference type="UniPathway" id="UPA00138"/>
<dbReference type="GO" id="GO:0005829">
    <property type="term" value="C:cytosol"/>
    <property type="evidence" value="ECO:0007669"/>
    <property type="project" value="TreeGrafter"/>
</dbReference>
<dbReference type="GO" id="GO:0004807">
    <property type="term" value="F:triose-phosphate isomerase activity"/>
    <property type="evidence" value="ECO:0007669"/>
    <property type="project" value="UniProtKB-UniRule"/>
</dbReference>
<dbReference type="GO" id="GO:0006094">
    <property type="term" value="P:gluconeogenesis"/>
    <property type="evidence" value="ECO:0007669"/>
    <property type="project" value="UniProtKB-UniRule"/>
</dbReference>
<dbReference type="GO" id="GO:0046166">
    <property type="term" value="P:glyceraldehyde-3-phosphate biosynthetic process"/>
    <property type="evidence" value="ECO:0007669"/>
    <property type="project" value="TreeGrafter"/>
</dbReference>
<dbReference type="GO" id="GO:0019563">
    <property type="term" value="P:glycerol catabolic process"/>
    <property type="evidence" value="ECO:0007669"/>
    <property type="project" value="TreeGrafter"/>
</dbReference>
<dbReference type="GO" id="GO:0006096">
    <property type="term" value="P:glycolytic process"/>
    <property type="evidence" value="ECO:0007669"/>
    <property type="project" value="UniProtKB-UniRule"/>
</dbReference>
<dbReference type="CDD" id="cd00311">
    <property type="entry name" value="TIM"/>
    <property type="match status" value="1"/>
</dbReference>
<dbReference type="FunFam" id="3.20.20.70:FF:000016">
    <property type="entry name" value="Triosephosphate isomerase"/>
    <property type="match status" value="1"/>
</dbReference>
<dbReference type="Gene3D" id="3.20.20.70">
    <property type="entry name" value="Aldolase class I"/>
    <property type="match status" value="1"/>
</dbReference>
<dbReference type="HAMAP" id="MF_00147_B">
    <property type="entry name" value="TIM_B"/>
    <property type="match status" value="1"/>
</dbReference>
<dbReference type="InterPro" id="IPR013785">
    <property type="entry name" value="Aldolase_TIM"/>
</dbReference>
<dbReference type="InterPro" id="IPR035990">
    <property type="entry name" value="TIM_sf"/>
</dbReference>
<dbReference type="InterPro" id="IPR022896">
    <property type="entry name" value="TrioseP_Isoase_bac/euk"/>
</dbReference>
<dbReference type="InterPro" id="IPR000652">
    <property type="entry name" value="Triosephosphate_isomerase"/>
</dbReference>
<dbReference type="InterPro" id="IPR020861">
    <property type="entry name" value="Triosephosphate_isomerase_AS"/>
</dbReference>
<dbReference type="NCBIfam" id="TIGR00419">
    <property type="entry name" value="tim"/>
    <property type="match status" value="1"/>
</dbReference>
<dbReference type="PANTHER" id="PTHR21139">
    <property type="entry name" value="TRIOSEPHOSPHATE ISOMERASE"/>
    <property type="match status" value="1"/>
</dbReference>
<dbReference type="PANTHER" id="PTHR21139:SF42">
    <property type="entry name" value="TRIOSEPHOSPHATE ISOMERASE"/>
    <property type="match status" value="1"/>
</dbReference>
<dbReference type="Pfam" id="PF00121">
    <property type="entry name" value="TIM"/>
    <property type="match status" value="1"/>
</dbReference>
<dbReference type="SUPFAM" id="SSF51351">
    <property type="entry name" value="Triosephosphate isomerase (TIM)"/>
    <property type="match status" value="1"/>
</dbReference>
<dbReference type="PROSITE" id="PS00171">
    <property type="entry name" value="TIM_1"/>
    <property type="match status" value="1"/>
</dbReference>
<dbReference type="PROSITE" id="PS51440">
    <property type="entry name" value="TIM_2"/>
    <property type="match status" value="1"/>
</dbReference>
<proteinExistence type="inferred from homology"/>